<keyword id="KW-0800">Toxin</keyword>
<accession>A0A023IWE0</accession>
<organism>
    <name type="scientific">Amanita fuligineoides</name>
    <dbReference type="NCBI Taxonomy" id="580329"/>
    <lineage>
        <taxon>Eukaryota</taxon>
        <taxon>Fungi</taxon>
        <taxon>Dikarya</taxon>
        <taxon>Basidiomycota</taxon>
        <taxon>Agaricomycotina</taxon>
        <taxon>Agaricomycetes</taxon>
        <taxon>Agaricomycetidae</taxon>
        <taxon>Agaricales</taxon>
        <taxon>Pluteineae</taxon>
        <taxon>Amanitaceae</taxon>
        <taxon>Amanita</taxon>
    </lineage>
</organism>
<comment type="function">
    <text evidence="4">Probable toxin that belongs to the MSDIN-like toxin family responsible for a large number of food poisoning cases and deaths (PubMed:24613547).</text>
</comment>
<comment type="PTM">
    <text evidence="1">Processed by the macrocyclase-peptidase enzyme POPB to yield a toxic cyclic heptapeptide (By similarity). POPB first removes 10 residues from the N-terminus (By similarity). Conformational trapping of the remaining peptide forces the enzyme to release this intermediate rather than proceed to macrocyclization (By similarity). The enzyme rebinds the remaining peptide in a different conformation and catalyzes macrocyclization of the N-terminal 7 residues (By similarity).</text>
</comment>
<comment type="similarity">
    <text evidence="3">Belongs to the MSDIN fungal toxin family.</text>
</comment>
<reference key="1">
    <citation type="journal article" date="2014" name="Toxicon">
        <title>The molecular diversity of toxin gene families in lethal Amanita mushrooms.</title>
        <authorList>
            <person name="Li P."/>
            <person name="Deng W."/>
            <person name="Li T."/>
        </authorList>
    </citation>
    <scope>NUCLEOTIDE SEQUENCE [GENOMIC DNA]</scope>
    <scope>FUNCTION</scope>
</reference>
<feature type="propeptide" id="PRO_0000443692" evidence="4">
    <location>
        <begin position="1"/>
        <end position="10"/>
    </location>
</feature>
<feature type="peptide" id="PRO_0000443693" description="Toxin MSD1" evidence="4">
    <location>
        <begin position="11"/>
        <end position="17"/>
    </location>
</feature>
<feature type="propeptide" id="PRO_0000443694" evidence="4">
    <location>
        <begin position="18"/>
        <end position="32"/>
    </location>
</feature>
<feature type="cross-link" description="Cyclopeptide (Ala-Pro)" evidence="4">
    <location>
        <begin position="11"/>
        <end position="17"/>
    </location>
</feature>
<sequence>MSDINATCLPAWLALCPCVGDDVNPTLTRGGT</sequence>
<name>MSD1_AMAFL</name>
<proteinExistence type="inferred from homology"/>
<protein>
    <recommendedName>
        <fullName evidence="2">MSDIN-like toxin proprotein 1</fullName>
    </recommendedName>
    <component>
        <recommendedName>
            <fullName evidence="4">Toxin MSD1</fullName>
        </recommendedName>
    </component>
</protein>
<evidence type="ECO:0000250" key="1">
    <source>
        <dbReference type="UniProtKB" id="A0A067SLB9"/>
    </source>
</evidence>
<evidence type="ECO:0000303" key="2">
    <source>
    </source>
</evidence>
<evidence type="ECO:0000305" key="3"/>
<evidence type="ECO:0000305" key="4">
    <source>
    </source>
</evidence>
<dbReference type="EMBL" id="KF552080">
    <property type="protein sequence ID" value="AHB18708.1"/>
    <property type="molecule type" value="Genomic_DNA"/>
</dbReference>
<dbReference type="GO" id="GO:0090729">
    <property type="term" value="F:toxin activity"/>
    <property type="evidence" value="ECO:0007669"/>
    <property type="project" value="UniProtKB-KW"/>
</dbReference>
<dbReference type="InterPro" id="IPR027582">
    <property type="entry name" value="Amanitin/phalloidin"/>
</dbReference>
<dbReference type="NCBIfam" id="TIGR04309">
    <property type="entry name" value="amanitin"/>
    <property type="match status" value="1"/>
</dbReference>